<comment type="function">
    <text evidence="1">Part of the Sec protein translocase complex. Interacts with the SecYEG preprotein conducting channel. Has a central role in coupling the hydrolysis of ATP to the transfer of proteins into and across the cell membrane, serving both as a receptor for the preprotein-SecB complex and as an ATP-driven molecular motor driving the stepwise translocation of polypeptide chains across the membrane.</text>
</comment>
<comment type="catalytic activity">
    <reaction evidence="1">
        <text>ATP + H2O + cellular proteinSide 1 = ADP + phosphate + cellular proteinSide 2.</text>
        <dbReference type="EC" id="7.4.2.8"/>
    </reaction>
</comment>
<comment type="cofactor">
    <cofactor evidence="1">
        <name>Zn(2+)</name>
        <dbReference type="ChEBI" id="CHEBI:29105"/>
    </cofactor>
    <text evidence="1">May bind 1 zinc ion per subunit.</text>
</comment>
<comment type="subunit">
    <text evidence="1">Monomer and homodimer. Part of the essential Sec protein translocation apparatus which comprises SecA, SecYEG and auxiliary proteins SecDF-YajC and YidC.</text>
</comment>
<comment type="subcellular location">
    <subcellularLocation>
        <location evidence="1">Cell inner membrane</location>
        <topology evidence="1">Peripheral membrane protein</topology>
        <orientation evidence="1">Cytoplasmic side</orientation>
    </subcellularLocation>
    <subcellularLocation>
        <location evidence="1">Cytoplasm</location>
    </subcellularLocation>
    <text evidence="1">Distribution is 50-50.</text>
</comment>
<comment type="similarity">
    <text evidence="1">Belongs to the SecA family.</text>
</comment>
<comment type="sequence caution" evidence="3">
    <conflict type="erroneous initiation">
        <sequence resource="EMBL-CDS" id="AAU27545"/>
    </conflict>
    <text>Extended N-terminus.</text>
</comment>
<organism>
    <name type="scientific">Legionella pneumophila subsp. pneumophila (strain Philadelphia 1 / ATCC 33152 / DSM 7513)</name>
    <dbReference type="NCBI Taxonomy" id="272624"/>
    <lineage>
        <taxon>Bacteria</taxon>
        <taxon>Pseudomonadati</taxon>
        <taxon>Pseudomonadota</taxon>
        <taxon>Gammaproteobacteria</taxon>
        <taxon>Legionellales</taxon>
        <taxon>Legionellaceae</taxon>
        <taxon>Legionella</taxon>
    </lineage>
</organism>
<protein>
    <recommendedName>
        <fullName evidence="1">Protein translocase subunit SecA</fullName>
        <ecNumber evidence="1">7.4.2.8</ecNumber>
    </recommendedName>
</protein>
<reference key="1">
    <citation type="journal article" date="2004" name="Science">
        <title>The genomic sequence of the accidental pathogen Legionella pneumophila.</title>
        <authorList>
            <person name="Chien M."/>
            <person name="Morozova I."/>
            <person name="Shi S."/>
            <person name="Sheng H."/>
            <person name="Chen J."/>
            <person name="Gomez S.M."/>
            <person name="Asamani G."/>
            <person name="Hill K."/>
            <person name="Nuara J."/>
            <person name="Feder M."/>
            <person name="Rineer J."/>
            <person name="Greenberg J.J."/>
            <person name="Steshenko V."/>
            <person name="Park S.H."/>
            <person name="Zhao B."/>
            <person name="Teplitskaya E."/>
            <person name="Edwards J.R."/>
            <person name="Pampou S."/>
            <person name="Georghiou A."/>
            <person name="Chou I.-C."/>
            <person name="Iannuccilli W."/>
            <person name="Ulz M.E."/>
            <person name="Kim D.H."/>
            <person name="Geringer-Sameth A."/>
            <person name="Goldsberry C."/>
            <person name="Morozov P."/>
            <person name="Fischer S.G."/>
            <person name="Segal G."/>
            <person name="Qu X."/>
            <person name="Rzhetsky A."/>
            <person name="Zhang P."/>
            <person name="Cayanis E."/>
            <person name="De Jong P.J."/>
            <person name="Ju J."/>
            <person name="Kalachikov S."/>
            <person name="Shuman H.A."/>
            <person name="Russo J.J."/>
        </authorList>
    </citation>
    <scope>NUCLEOTIDE SEQUENCE [LARGE SCALE GENOMIC DNA]</scope>
    <source>
        <strain>Philadelphia 1 / ATCC 33152 / DSM 7513</strain>
    </source>
</reference>
<feature type="chain" id="PRO_0000320842" description="Protein translocase subunit SecA">
    <location>
        <begin position="1"/>
        <end position="896"/>
    </location>
</feature>
<feature type="region of interest" description="Disordered" evidence="2">
    <location>
        <begin position="853"/>
        <end position="879"/>
    </location>
</feature>
<feature type="compositionally biased region" description="Basic and acidic residues" evidence="2">
    <location>
        <begin position="866"/>
        <end position="876"/>
    </location>
</feature>
<feature type="binding site" evidence="1">
    <location>
        <position position="87"/>
    </location>
    <ligand>
        <name>ATP</name>
        <dbReference type="ChEBI" id="CHEBI:30616"/>
    </ligand>
</feature>
<feature type="binding site" evidence="1">
    <location>
        <begin position="105"/>
        <end position="109"/>
    </location>
    <ligand>
        <name>ATP</name>
        <dbReference type="ChEBI" id="CHEBI:30616"/>
    </ligand>
</feature>
<feature type="binding site" evidence="1">
    <location>
        <position position="507"/>
    </location>
    <ligand>
        <name>ATP</name>
        <dbReference type="ChEBI" id="CHEBI:30616"/>
    </ligand>
</feature>
<feature type="binding site" evidence="1">
    <location>
        <position position="880"/>
    </location>
    <ligand>
        <name>Zn(2+)</name>
        <dbReference type="ChEBI" id="CHEBI:29105"/>
    </ligand>
</feature>
<feature type="binding site" evidence="1">
    <location>
        <position position="882"/>
    </location>
    <ligand>
        <name>Zn(2+)</name>
        <dbReference type="ChEBI" id="CHEBI:29105"/>
    </ligand>
</feature>
<feature type="binding site" evidence="1">
    <location>
        <position position="891"/>
    </location>
    <ligand>
        <name>Zn(2+)</name>
        <dbReference type="ChEBI" id="CHEBI:29105"/>
    </ligand>
</feature>
<feature type="binding site" evidence="1">
    <location>
        <position position="892"/>
    </location>
    <ligand>
        <name>Zn(2+)</name>
        <dbReference type="ChEBI" id="CHEBI:29105"/>
    </ligand>
</feature>
<sequence length="896" mass="101977">MLSTLIKKMFGSRNERTLRRMEKSVMAINAFEPKMQALSNEELAGKTQEFKERFNNGESLDELLAEAFATVREVSLRTLGLRHFDVQLIGGMVLHEGNIAEMRTGEGKTLVATLPAYLNAISGRGVHIVTVNDYLAKRDSQWMKPIYEFLGLTVGVIYPDMSHKEKQEAYKADIVYGTNNEYGFDYLRDNMAFSLTDKVQRELNFAIVDEVDSILIDEARTPLIISGAAEDSSELYIKINSLIPQLKKQEEEGDEGDYTIDEKQKQAHLTDAGHLHIEELLTKAKLLDPGESLYHASNIMLMHHVNAALKAHAMFHRDIDYIVKDNQVVIVDEHTGRTMPGRRWSEGLHQAVEAKEGVPIQNENQTLASITFQNFFRMYNKLSGMTGTADTEAYEFQQIYNLEVVVIPTNRSMIRKDEADLVYLTQADKFQAIIEDVRECGVRRQPVLVGTVSIEASEFLSQLLKKENIKHQVLNAKFHEKEAQIIAEAGRPGAVTIATNMAGRGTDIVLGGSLAADLANLPADASEQEKEAVKKEWQKRHDEVIAAGGLRIIGSERHESRRIDNQLRGRAGRQGDPGSSRFYLSLEDNLMRIFASERVASMMRRLGMQPGEPIEHSLVTRAIENAQRKLEGHHFDVRKQLLDYDNVANDQRQVIYTQRSSIMAMTDTQEVVEMMREEVMDSLVDTYIPPQSLEDQWDPQALSDVLSDEFKIKAPVPDWIDKDHSIQPEKIKEKILALAIEHYDEKVRKVGRPVISQFEKSIILQTLDNHWREHLAAMDQLRQGIHLRGYAQKDPKQEYKKEAFSLFTMMLDNLKYEVIRILSSVEIQTEEDAHVVEEQRRADQIRKMNLMHESLSENDEASETQTFRRQEKKIGRNDPCPCGSGKKYKACHGSLV</sequence>
<evidence type="ECO:0000255" key="1">
    <source>
        <dbReference type="HAMAP-Rule" id="MF_01382"/>
    </source>
</evidence>
<evidence type="ECO:0000256" key="2">
    <source>
        <dbReference type="SAM" id="MobiDB-lite"/>
    </source>
</evidence>
<evidence type="ECO:0000305" key="3"/>
<dbReference type="EC" id="7.4.2.8" evidence="1"/>
<dbReference type="EMBL" id="AE017354">
    <property type="protein sequence ID" value="AAU27545.1"/>
    <property type="status" value="ALT_INIT"/>
    <property type="molecule type" value="Genomic_DNA"/>
</dbReference>
<dbReference type="RefSeq" id="WP_010947192.1">
    <property type="nucleotide sequence ID" value="NC_002942.5"/>
</dbReference>
<dbReference type="RefSeq" id="YP_095492.2">
    <property type="nucleotide sequence ID" value="NC_002942.5"/>
</dbReference>
<dbReference type="SMR" id="Q5ZVH7"/>
<dbReference type="STRING" id="272624.lpg1463"/>
<dbReference type="PaxDb" id="272624-lpg1463"/>
<dbReference type="GeneID" id="57035453"/>
<dbReference type="KEGG" id="lpn:lpg1463"/>
<dbReference type="PATRIC" id="fig|272624.6.peg.1534"/>
<dbReference type="eggNOG" id="COG0653">
    <property type="taxonomic scope" value="Bacteria"/>
</dbReference>
<dbReference type="HOGENOM" id="CLU_005314_3_0_6"/>
<dbReference type="OrthoDB" id="9805579at2"/>
<dbReference type="Proteomes" id="UP000000609">
    <property type="component" value="Chromosome"/>
</dbReference>
<dbReference type="GO" id="GO:0031522">
    <property type="term" value="C:cell envelope Sec protein transport complex"/>
    <property type="evidence" value="ECO:0007669"/>
    <property type="project" value="TreeGrafter"/>
</dbReference>
<dbReference type="GO" id="GO:0005829">
    <property type="term" value="C:cytosol"/>
    <property type="evidence" value="ECO:0007669"/>
    <property type="project" value="TreeGrafter"/>
</dbReference>
<dbReference type="GO" id="GO:0005886">
    <property type="term" value="C:plasma membrane"/>
    <property type="evidence" value="ECO:0007669"/>
    <property type="project" value="UniProtKB-SubCell"/>
</dbReference>
<dbReference type="GO" id="GO:0005524">
    <property type="term" value="F:ATP binding"/>
    <property type="evidence" value="ECO:0007669"/>
    <property type="project" value="UniProtKB-UniRule"/>
</dbReference>
<dbReference type="GO" id="GO:0046872">
    <property type="term" value="F:metal ion binding"/>
    <property type="evidence" value="ECO:0007669"/>
    <property type="project" value="UniProtKB-KW"/>
</dbReference>
<dbReference type="GO" id="GO:0008564">
    <property type="term" value="F:protein-exporting ATPase activity"/>
    <property type="evidence" value="ECO:0007669"/>
    <property type="project" value="UniProtKB-EC"/>
</dbReference>
<dbReference type="GO" id="GO:0065002">
    <property type="term" value="P:intracellular protein transmembrane transport"/>
    <property type="evidence" value="ECO:0007669"/>
    <property type="project" value="UniProtKB-UniRule"/>
</dbReference>
<dbReference type="GO" id="GO:0017038">
    <property type="term" value="P:protein import"/>
    <property type="evidence" value="ECO:0007669"/>
    <property type="project" value="InterPro"/>
</dbReference>
<dbReference type="GO" id="GO:0006605">
    <property type="term" value="P:protein targeting"/>
    <property type="evidence" value="ECO:0007669"/>
    <property type="project" value="UniProtKB-UniRule"/>
</dbReference>
<dbReference type="GO" id="GO:0043952">
    <property type="term" value="P:protein transport by the Sec complex"/>
    <property type="evidence" value="ECO:0007669"/>
    <property type="project" value="TreeGrafter"/>
</dbReference>
<dbReference type="CDD" id="cd17928">
    <property type="entry name" value="DEXDc_SecA"/>
    <property type="match status" value="1"/>
</dbReference>
<dbReference type="CDD" id="cd18803">
    <property type="entry name" value="SF2_C_secA"/>
    <property type="match status" value="1"/>
</dbReference>
<dbReference type="FunFam" id="3.40.50.300:FF:000113">
    <property type="entry name" value="Preprotein translocase subunit SecA"/>
    <property type="match status" value="1"/>
</dbReference>
<dbReference type="FunFam" id="3.90.1440.10:FF:000001">
    <property type="entry name" value="Preprotein translocase subunit SecA"/>
    <property type="match status" value="1"/>
</dbReference>
<dbReference type="FunFam" id="1.10.3060.10:FF:000003">
    <property type="entry name" value="Protein translocase subunit SecA"/>
    <property type="match status" value="1"/>
</dbReference>
<dbReference type="FunFam" id="3.40.50.300:FF:000334">
    <property type="entry name" value="Protein translocase subunit SecA"/>
    <property type="match status" value="1"/>
</dbReference>
<dbReference type="Gene3D" id="1.10.3060.10">
    <property type="entry name" value="Helical scaffold and wing domains of SecA"/>
    <property type="match status" value="1"/>
</dbReference>
<dbReference type="Gene3D" id="3.40.50.300">
    <property type="entry name" value="P-loop containing nucleotide triphosphate hydrolases"/>
    <property type="match status" value="2"/>
</dbReference>
<dbReference type="Gene3D" id="3.90.1440.10">
    <property type="entry name" value="SecA, preprotein cross-linking domain"/>
    <property type="match status" value="1"/>
</dbReference>
<dbReference type="HAMAP" id="MF_01382">
    <property type="entry name" value="SecA"/>
    <property type="match status" value="1"/>
</dbReference>
<dbReference type="InterPro" id="IPR014001">
    <property type="entry name" value="Helicase_ATP-bd"/>
</dbReference>
<dbReference type="InterPro" id="IPR001650">
    <property type="entry name" value="Helicase_C-like"/>
</dbReference>
<dbReference type="InterPro" id="IPR027417">
    <property type="entry name" value="P-loop_NTPase"/>
</dbReference>
<dbReference type="InterPro" id="IPR004027">
    <property type="entry name" value="SEC_C_motif"/>
</dbReference>
<dbReference type="InterPro" id="IPR000185">
    <property type="entry name" value="SecA"/>
</dbReference>
<dbReference type="InterPro" id="IPR020937">
    <property type="entry name" value="SecA_CS"/>
</dbReference>
<dbReference type="InterPro" id="IPR011115">
    <property type="entry name" value="SecA_DEAD"/>
</dbReference>
<dbReference type="InterPro" id="IPR014018">
    <property type="entry name" value="SecA_motor_DEAD"/>
</dbReference>
<dbReference type="InterPro" id="IPR011130">
    <property type="entry name" value="SecA_preprotein_X-link_dom"/>
</dbReference>
<dbReference type="InterPro" id="IPR044722">
    <property type="entry name" value="SecA_SF2_C"/>
</dbReference>
<dbReference type="InterPro" id="IPR011116">
    <property type="entry name" value="SecA_Wing/Scaffold"/>
</dbReference>
<dbReference type="InterPro" id="IPR036266">
    <property type="entry name" value="SecA_Wing/Scaffold_sf"/>
</dbReference>
<dbReference type="InterPro" id="IPR036670">
    <property type="entry name" value="SecA_X-link_sf"/>
</dbReference>
<dbReference type="NCBIfam" id="NF009538">
    <property type="entry name" value="PRK12904.1"/>
    <property type="match status" value="1"/>
</dbReference>
<dbReference type="NCBIfam" id="TIGR00963">
    <property type="entry name" value="secA"/>
    <property type="match status" value="1"/>
</dbReference>
<dbReference type="PANTHER" id="PTHR30612:SF0">
    <property type="entry name" value="CHLOROPLAST PROTEIN-TRANSPORTING ATPASE"/>
    <property type="match status" value="1"/>
</dbReference>
<dbReference type="PANTHER" id="PTHR30612">
    <property type="entry name" value="SECA INNER MEMBRANE COMPONENT OF SEC PROTEIN SECRETION SYSTEM"/>
    <property type="match status" value="1"/>
</dbReference>
<dbReference type="Pfam" id="PF21090">
    <property type="entry name" value="P-loop_SecA"/>
    <property type="match status" value="1"/>
</dbReference>
<dbReference type="Pfam" id="PF02810">
    <property type="entry name" value="SEC-C"/>
    <property type="match status" value="1"/>
</dbReference>
<dbReference type="Pfam" id="PF07517">
    <property type="entry name" value="SecA_DEAD"/>
    <property type="match status" value="1"/>
</dbReference>
<dbReference type="Pfam" id="PF01043">
    <property type="entry name" value="SecA_PP_bind"/>
    <property type="match status" value="1"/>
</dbReference>
<dbReference type="Pfam" id="PF07516">
    <property type="entry name" value="SecA_SW"/>
    <property type="match status" value="1"/>
</dbReference>
<dbReference type="PRINTS" id="PR00906">
    <property type="entry name" value="SECA"/>
</dbReference>
<dbReference type="SMART" id="SM00957">
    <property type="entry name" value="SecA_DEAD"/>
    <property type="match status" value="1"/>
</dbReference>
<dbReference type="SMART" id="SM00958">
    <property type="entry name" value="SecA_PP_bind"/>
    <property type="match status" value="1"/>
</dbReference>
<dbReference type="SUPFAM" id="SSF81886">
    <property type="entry name" value="Helical scaffold and wing domains of SecA"/>
    <property type="match status" value="1"/>
</dbReference>
<dbReference type="SUPFAM" id="SSF52540">
    <property type="entry name" value="P-loop containing nucleoside triphosphate hydrolases"/>
    <property type="match status" value="2"/>
</dbReference>
<dbReference type="SUPFAM" id="SSF81767">
    <property type="entry name" value="Pre-protein crosslinking domain of SecA"/>
    <property type="match status" value="1"/>
</dbReference>
<dbReference type="PROSITE" id="PS01312">
    <property type="entry name" value="SECA"/>
    <property type="match status" value="1"/>
</dbReference>
<dbReference type="PROSITE" id="PS51196">
    <property type="entry name" value="SECA_MOTOR_DEAD"/>
    <property type="match status" value="1"/>
</dbReference>
<proteinExistence type="inferred from homology"/>
<gene>
    <name evidence="1" type="primary">secA</name>
    <name type="ordered locus">lpg1463</name>
</gene>
<keyword id="KW-0067">ATP-binding</keyword>
<keyword id="KW-0997">Cell inner membrane</keyword>
<keyword id="KW-1003">Cell membrane</keyword>
<keyword id="KW-0963">Cytoplasm</keyword>
<keyword id="KW-0472">Membrane</keyword>
<keyword id="KW-0479">Metal-binding</keyword>
<keyword id="KW-0547">Nucleotide-binding</keyword>
<keyword id="KW-0653">Protein transport</keyword>
<keyword id="KW-1185">Reference proteome</keyword>
<keyword id="KW-1278">Translocase</keyword>
<keyword id="KW-0811">Translocation</keyword>
<keyword id="KW-0813">Transport</keyword>
<keyword id="KW-0862">Zinc</keyword>
<accession>Q5ZVH7</accession>
<name>SECA_LEGPH</name>